<accession>Q255E4</accession>
<protein>
    <recommendedName>
        <fullName evidence="2">Transaldolase</fullName>
        <ecNumber evidence="2">2.2.1.2</ecNumber>
    </recommendedName>
</protein>
<evidence type="ECO:0000250" key="1"/>
<evidence type="ECO:0000255" key="2">
    <source>
        <dbReference type="HAMAP-Rule" id="MF_00492"/>
    </source>
</evidence>
<proteinExistence type="inferred from homology"/>
<name>TAL_CHLFF</name>
<organism>
    <name type="scientific">Chlamydia felis (strain Fe/C-56)</name>
    <name type="common">Chlamydophila felis</name>
    <dbReference type="NCBI Taxonomy" id="264202"/>
    <lineage>
        <taxon>Bacteria</taxon>
        <taxon>Pseudomonadati</taxon>
        <taxon>Chlamydiota</taxon>
        <taxon>Chlamydiia</taxon>
        <taxon>Chlamydiales</taxon>
        <taxon>Chlamydiaceae</taxon>
        <taxon>Chlamydia/Chlamydophila group</taxon>
        <taxon>Chlamydia</taxon>
    </lineage>
</organism>
<dbReference type="EC" id="2.2.1.2" evidence="2"/>
<dbReference type="EMBL" id="AP006861">
    <property type="protein sequence ID" value="BAE81094.1"/>
    <property type="molecule type" value="Genomic_DNA"/>
</dbReference>
<dbReference type="RefSeq" id="WP_011457874.1">
    <property type="nucleotide sequence ID" value="NC_007899.1"/>
</dbReference>
<dbReference type="SMR" id="Q255E4"/>
<dbReference type="STRING" id="264202.CF0322"/>
<dbReference type="KEGG" id="cfe:CF0322"/>
<dbReference type="eggNOG" id="COG0176">
    <property type="taxonomic scope" value="Bacteria"/>
</dbReference>
<dbReference type="HOGENOM" id="CLU_047470_0_1_0"/>
<dbReference type="OrthoDB" id="9807051at2"/>
<dbReference type="UniPathway" id="UPA00115">
    <property type="reaction ID" value="UER00414"/>
</dbReference>
<dbReference type="Proteomes" id="UP000001260">
    <property type="component" value="Chromosome"/>
</dbReference>
<dbReference type="GO" id="GO:0005737">
    <property type="term" value="C:cytoplasm"/>
    <property type="evidence" value="ECO:0007669"/>
    <property type="project" value="UniProtKB-SubCell"/>
</dbReference>
<dbReference type="GO" id="GO:0004801">
    <property type="term" value="F:transaldolase activity"/>
    <property type="evidence" value="ECO:0000250"/>
    <property type="project" value="UniProtKB"/>
</dbReference>
<dbReference type="GO" id="GO:0005975">
    <property type="term" value="P:carbohydrate metabolic process"/>
    <property type="evidence" value="ECO:0007669"/>
    <property type="project" value="InterPro"/>
</dbReference>
<dbReference type="GO" id="GO:0006098">
    <property type="term" value="P:pentose-phosphate shunt"/>
    <property type="evidence" value="ECO:0007669"/>
    <property type="project" value="UniProtKB-UniRule"/>
</dbReference>
<dbReference type="CDD" id="cd00957">
    <property type="entry name" value="Transaldolase_TalAB"/>
    <property type="match status" value="1"/>
</dbReference>
<dbReference type="FunFam" id="3.20.20.70:FF:000163">
    <property type="entry name" value="Transaldolase B"/>
    <property type="match status" value="1"/>
</dbReference>
<dbReference type="Gene3D" id="3.20.20.70">
    <property type="entry name" value="Aldolase class I"/>
    <property type="match status" value="1"/>
</dbReference>
<dbReference type="HAMAP" id="MF_00492">
    <property type="entry name" value="Transaldolase_1"/>
    <property type="match status" value="1"/>
</dbReference>
<dbReference type="InterPro" id="IPR013785">
    <property type="entry name" value="Aldolase_TIM"/>
</dbReference>
<dbReference type="InterPro" id="IPR001585">
    <property type="entry name" value="TAL/FSA"/>
</dbReference>
<dbReference type="InterPro" id="IPR004730">
    <property type="entry name" value="Transaldolase_1"/>
</dbReference>
<dbReference type="InterPro" id="IPR018225">
    <property type="entry name" value="Transaldolase_AS"/>
</dbReference>
<dbReference type="NCBIfam" id="TIGR00874">
    <property type="entry name" value="talAB"/>
    <property type="match status" value="1"/>
</dbReference>
<dbReference type="PANTHER" id="PTHR10683">
    <property type="entry name" value="TRANSALDOLASE"/>
    <property type="match status" value="1"/>
</dbReference>
<dbReference type="PANTHER" id="PTHR10683:SF18">
    <property type="entry name" value="TRANSALDOLASE"/>
    <property type="match status" value="1"/>
</dbReference>
<dbReference type="Pfam" id="PF00923">
    <property type="entry name" value="TAL_FSA"/>
    <property type="match status" value="1"/>
</dbReference>
<dbReference type="SUPFAM" id="SSF51569">
    <property type="entry name" value="Aldolase"/>
    <property type="match status" value="1"/>
</dbReference>
<dbReference type="PROSITE" id="PS01054">
    <property type="entry name" value="TRANSALDOLASE_1"/>
    <property type="match status" value="1"/>
</dbReference>
<dbReference type="PROSITE" id="PS00958">
    <property type="entry name" value="TRANSALDOLASE_2"/>
    <property type="match status" value="1"/>
</dbReference>
<sequence>MSSQFEQLKLLSVLVCDTGDPELVKSSGSQDATTNPSLILKVAQEPKYQEMLTEAIAWGIRQNGDDVQTLTFVLDKIQVNFGLEILKCIPGRVSLEIDARLSFNTEAMVQRAIFLSELFVASGGDKKRLLVKIPGTWEGIQAVEILEKQGISCNVTLIFNLIQAIAAAKAKATLISPFVGRIYDWWIAAYGDEGYSIDTDPGVASVSNIYTYYKKFDIPTQIMAASFRSKEQVLALAGCDLLTVSPKLLDELKKDQSSVTKKLDVAEAKKLDVQPVELTESVFRFLMNEDAMATEKLAEGIRIFSGDTQILEAAVTEFIKQIAAQDA</sequence>
<gene>
    <name evidence="2" type="primary">tal</name>
    <name type="ordered locus">CF0322</name>
</gene>
<feature type="chain" id="PRO_1000014497" description="Transaldolase">
    <location>
        <begin position="1"/>
        <end position="327"/>
    </location>
</feature>
<feature type="active site" description="Schiff-base intermediate with substrate" evidence="2">
    <location>
        <position position="132"/>
    </location>
</feature>
<keyword id="KW-0963">Cytoplasm</keyword>
<keyword id="KW-0570">Pentose shunt</keyword>
<keyword id="KW-0704">Schiff base</keyword>
<keyword id="KW-0808">Transferase</keyword>
<comment type="function">
    <text evidence="2">Transaldolase is important for the balance of metabolites in the pentose-phosphate pathway.</text>
</comment>
<comment type="catalytic activity">
    <reaction evidence="2">
        <text>D-sedoheptulose 7-phosphate + D-glyceraldehyde 3-phosphate = D-erythrose 4-phosphate + beta-D-fructose 6-phosphate</text>
        <dbReference type="Rhea" id="RHEA:17053"/>
        <dbReference type="ChEBI" id="CHEBI:16897"/>
        <dbReference type="ChEBI" id="CHEBI:57483"/>
        <dbReference type="ChEBI" id="CHEBI:57634"/>
        <dbReference type="ChEBI" id="CHEBI:59776"/>
        <dbReference type="EC" id="2.2.1.2"/>
    </reaction>
</comment>
<comment type="pathway">
    <text evidence="2">Carbohydrate degradation; pentose phosphate pathway; D-glyceraldehyde 3-phosphate and beta-D-fructose 6-phosphate from D-ribose 5-phosphate and D-xylulose 5-phosphate (non-oxidative stage): step 2/3.</text>
</comment>
<comment type="subunit">
    <text evidence="1">Homodimer.</text>
</comment>
<comment type="subcellular location">
    <subcellularLocation>
        <location evidence="2">Cytoplasm</location>
    </subcellularLocation>
</comment>
<comment type="similarity">
    <text evidence="2">Belongs to the transaldolase family. Type 1 subfamily.</text>
</comment>
<reference key="1">
    <citation type="journal article" date="2006" name="DNA Res.">
        <title>Genome sequence of the cat pathogen, Chlamydophila felis.</title>
        <authorList>
            <person name="Azuma Y."/>
            <person name="Hirakawa H."/>
            <person name="Yamashita A."/>
            <person name="Cai Y."/>
            <person name="Rahman M.A."/>
            <person name="Suzuki H."/>
            <person name="Mitaku S."/>
            <person name="Toh H."/>
            <person name="Goto S."/>
            <person name="Murakami T."/>
            <person name="Sugi K."/>
            <person name="Hayashi H."/>
            <person name="Fukushi H."/>
            <person name="Hattori M."/>
            <person name="Kuhara S."/>
            <person name="Shirai M."/>
        </authorList>
    </citation>
    <scope>NUCLEOTIDE SEQUENCE [LARGE SCALE GENOMIC DNA]</scope>
    <source>
        <strain>Fe/C-56</strain>
    </source>
</reference>